<organism>
    <name type="scientific">Pseudomonas aeruginosa (strain UCBPP-PA14)</name>
    <dbReference type="NCBI Taxonomy" id="208963"/>
    <lineage>
        <taxon>Bacteria</taxon>
        <taxon>Pseudomonadati</taxon>
        <taxon>Pseudomonadota</taxon>
        <taxon>Gammaproteobacteria</taxon>
        <taxon>Pseudomonadales</taxon>
        <taxon>Pseudomonadaceae</taxon>
        <taxon>Pseudomonas</taxon>
    </lineage>
</organism>
<name>GLSA_PSEAB</name>
<evidence type="ECO:0000255" key="1">
    <source>
        <dbReference type="HAMAP-Rule" id="MF_00313"/>
    </source>
</evidence>
<accession>Q02KC3</accession>
<gene>
    <name evidence="1" type="primary">glsA</name>
    <name type="ordered locus">PA14_43320</name>
</gene>
<reference key="1">
    <citation type="journal article" date="2006" name="Genome Biol.">
        <title>Genomic analysis reveals that Pseudomonas aeruginosa virulence is combinatorial.</title>
        <authorList>
            <person name="Lee D.G."/>
            <person name="Urbach J.M."/>
            <person name="Wu G."/>
            <person name="Liberati N.T."/>
            <person name="Feinbaum R.L."/>
            <person name="Miyata S."/>
            <person name="Diggins L.T."/>
            <person name="He J."/>
            <person name="Saucier M."/>
            <person name="Deziel E."/>
            <person name="Friedman L."/>
            <person name="Li L."/>
            <person name="Grills G."/>
            <person name="Montgomery K."/>
            <person name="Kucherlapati R."/>
            <person name="Rahme L.G."/>
            <person name="Ausubel F.M."/>
        </authorList>
    </citation>
    <scope>NUCLEOTIDE SEQUENCE [LARGE SCALE GENOMIC DNA]</scope>
    <source>
        <strain>UCBPP-PA14</strain>
    </source>
</reference>
<keyword id="KW-0378">Hydrolase</keyword>
<proteinExistence type="inferred from homology"/>
<feature type="chain" id="PRO_1000048341" description="Glutaminase">
    <location>
        <begin position="1"/>
        <end position="302"/>
    </location>
</feature>
<feature type="binding site" evidence="1">
    <location>
        <position position="61"/>
    </location>
    <ligand>
        <name>substrate</name>
    </ligand>
</feature>
<feature type="binding site" evidence="1">
    <location>
        <position position="111"/>
    </location>
    <ligand>
        <name>substrate</name>
    </ligand>
</feature>
<feature type="binding site" evidence="1">
    <location>
        <position position="155"/>
    </location>
    <ligand>
        <name>substrate</name>
    </ligand>
</feature>
<feature type="binding site" evidence="1">
    <location>
        <position position="162"/>
    </location>
    <ligand>
        <name>substrate</name>
    </ligand>
</feature>
<feature type="binding site" evidence="1">
    <location>
        <position position="186"/>
    </location>
    <ligand>
        <name>substrate</name>
    </ligand>
</feature>
<feature type="binding site" evidence="1">
    <location>
        <position position="238"/>
    </location>
    <ligand>
        <name>substrate</name>
    </ligand>
</feature>
<feature type="binding site" evidence="1">
    <location>
        <position position="256"/>
    </location>
    <ligand>
        <name>substrate</name>
    </ligand>
</feature>
<sequence length="302" mass="33012">MQQLLNEILDEVRPLIGRGKVADYIPALAGVEPNQLGIAVYSRDGELFHAGDALRPFSIQSISKVFSLVQAIQHSGEDIWQRLGHEPSGQPFNSLVQLEFERGKPRNPFINAGALVICDINQSRFAAPAQSMRDFVRRLCGNPEVVSDSVVARSEYQHRSRNAAAAYLMKSFGNFHNDVEAVLLSYFHHCALRMSCVDLARAFCFLADKGFCKHSGEQVLNERQTKQVNAIMATSGLYDEAGNFAYRVGLPGKSGVGGGIIAVVPGRFTVCVWSPELNAAGNSLAGIAALEKLSERIGWSIF</sequence>
<dbReference type="EC" id="3.5.1.2" evidence="1"/>
<dbReference type="EMBL" id="CP000438">
    <property type="protein sequence ID" value="ABJ10818.1"/>
    <property type="molecule type" value="Genomic_DNA"/>
</dbReference>
<dbReference type="SMR" id="Q02KC3"/>
<dbReference type="KEGG" id="pau:PA14_43320"/>
<dbReference type="PseudoCAP" id="PA14_43320"/>
<dbReference type="HOGENOM" id="CLU_027932_1_1_6"/>
<dbReference type="BioCyc" id="PAER208963:G1G74-3636-MONOMER"/>
<dbReference type="Proteomes" id="UP000000653">
    <property type="component" value="Chromosome"/>
</dbReference>
<dbReference type="GO" id="GO:0004359">
    <property type="term" value="F:glutaminase activity"/>
    <property type="evidence" value="ECO:0007669"/>
    <property type="project" value="UniProtKB-UniRule"/>
</dbReference>
<dbReference type="GO" id="GO:0006537">
    <property type="term" value="P:glutamate biosynthetic process"/>
    <property type="evidence" value="ECO:0007669"/>
    <property type="project" value="TreeGrafter"/>
</dbReference>
<dbReference type="GO" id="GO:0006543">
    <property type="term" value="P:glutamine catabolic process"/>
    <property type="evidence" value="ECO:0007669"/>
    <property type="project" value="TreeGrafter"/>
</dbReference>
<dbReference type="FunFam" id="3.40.710.10:FF:000005">
    <property type="entry name" value="Glutaminase"/>
    <property type="match status" value="1"/>
</dbReference>
<dbReference type="Gene3D" id="3.40.710.10">
    <property type="entry name" value="DD-peptidase/beta-lactamase superfamily"/>
    <property type="match status" value="1"/>
</dbReference>
<dbReference type="HAMAP" id="MF_00313">
    <property type="entry name" value="Glutaminase"/>
    <property type="match status" value="1"/>
</dbReference>
<dbReference type="InterPro" id="IPR012338">
    <property type="entry name" value="Beta-lactam/transpept-like"/>
</dbReference>
<dbReference type="InterPro" id="IPR015868">
    <property type="entry name" value="Glutaminase"/>
</dbReference>
<dbReference type="NCBIfam" id="TIGR03814">
    <property type="entry name" value="Gln_ase"/>
    <property type="match status" value="1"/>
</dbReference>
<dbReference type="NCBIfam" id="NF002132">
    <property type="entry name" value="PRK00971.1-1"/>
    <property type="match status" value="1"/>
</dbReference>
<dbReference type="NCBIfam" id="NF002133">
    <property type="entry name" value="PRK00971.1-2"/>
    <property type="match status" value="1"/>
</dbReference>
<dbReference type="PANTHER" id="PTHR12544">
    <property type="entry name" value="GLUTAMINASE"/>
    <property type="match status" value="1"/>
</dbReference>
<dbReference type="PANTHER" id="PTHR12544:SF29">
    <property type="entry name" value="GLUTAMINASE"/>
    <property type="match status" value="1"/>
</dbReference>
<dbReference type="Pfam" id="PF04960">
    <property type="entry name" value="Glutaminase"/>
    <property type="match status" value="1"/>
</dbReference>
<dbReference type="SUPFAM" id="SSF56601">
    <property type="entry name" value="beta-lactamase/transpeptidase-like"/>
    <property type="match status" value="1"/>
</dbReference>
<comment type="catalytic activity">
    <reaction evidence="1">
        <text>L-glutamine + H2O = L-glutamate + NH4(+)</text>
        <dbReference type="Rhea" id="RHEA:15889"/>
        <dbReference type="ChEBI" id="CHEBI:15377"/>
        <dbReference type="ChEBI" id="CHEBI:28938"/>
        <dbReference type="ChEBI" id="CHEBI:29985"/>
        <dbReference type="ChEBI" id="CHEBI:58359"/>
        <dbReference type="EC" id="3.5.1.2"/>
    </reaction>
</comment>
<comment type="subunit">
    <text evidence="1">Homotetramer.</text>
</comment>
<comment type="similarity">
    <text evidence="1">Belongs to the glutaminase family.</text>
</comment>
<protein>
    <recommendedName>
        <fullName evidence="1">Glutaminase</fullName>
        <ecNumber evidence="1">3.5.1.2</ecNumber>
    </recommendedName>
</protein>